<reference key="1">
    <citation type="submission" date="2007-05" db="EMBL/GenBank/DDBJ databases">
        <title>Complete sequence of Geobacter uraniireducens Rf4.</title>
        <authorList>
            <consortium name="US DOE Joint Genome Institute"/>
            <person name="Copeland A."/>
            <person name="Lucas S."/>
            <person name="Lapidus A."/>
            <person name="Barry K."/>
            <person name="Detter J.C."/>
            <person name="Glavina del Rio T."/>
            <person name="Hammon N."/>
            <person name="Israni S."/>
            <person name="Dalin E."/>
            <person name="Tice H."/>
            <person name="Pitluck S."/>
            <person name="Chertkov O."/>
            <person name="Brettin T."/>
            <person name="Bruce D."/>
            <person name="Han C."/>
            <person name="Schmutz J."/>
            <person name="Larimer F."/>
            <person name="Land M."/>
            <person name="Hauser L."/>
            <person name="Kyrpides N."/>
            <person name="Mikhailova N."/>
            <person name="Shelobolina E."/>
            <person name="Aklujkar M."/>
            <person name="Lovley D."/>
            <person name="Richardson P."/>
        </authorList>
    </citation>
    <scope>NUCLEOTIDE SEQUENCE [LARGE SCALE GENOMIC DNA]</scope>
    <source>
        <strain>ATCC BAA-1134 / JCM 13001 / Rf4</strain>
    </source>
</reference>
<accession>A5G8K9</accession>
<comment type="subunit">
    <text evidence="1">Forms oligomers.</text>
</comment>
<comment type="subcellular location">
    <subcellularLocation>
        <location evidence="1">Cytoplasm</location>
        <location evidence="1">Nucleoid</location>
    </subcellularLocation>
</comment>
<comment type="similarity">
    <text evidence="1">Belongs to the MraZ family.</text>
</comment>
<dbReference type="EMBL" id="CP000698">
    <property type="protein sequence ID" value="ABQ28127.1"/>
    <property type="molecule type" value="Genomic_DNA"/>
</dbReference>
<dbReference type="RefSeq" id="WP_011940764.1">
    <property type="nucleotide sequence ID" value="NC_009483.1"/>
</dbReference>
<dbReference type="SMR" id="A5G8K9"/>
<dbReference type="STRING" id="351605.Gura_3983"/>
<dbReference type="KEGG" id="gur:Gura_3983"/>
<dbReference type="HOGENOM" id="CLU_107907_0_5_7"/>
<dbReference type="OrthoDB" id="9807753at2"/>
<dbReference type="Proteomes" id="UP000006695">
    <property type="component" value="Chromosome"/>
</dbReference>
<dbReference type="GO" id="GO:0005737">
    <property type="term" value="C:cytoplasm"/>
    <property type="evidence" value="ECO:0007669"/>
    <property type="project" value="UniProtKB-UniRule"/>
</dbReference>
<dbReference type="GO" id="GO:0009295">
    <property type="term" value="C:nucleoid"/>
    <property type="evidence" value="ECO:0007669"/>
    <property type="project" value="UniProtKB-SubCell"/>
</dbReference>
<dbReference type="GO" id="GO:0003700">
    <property type="term" value="F:DNA-binding transcription factor activity"/>
    <property type="evidence" value="ECO:0007669"/>
    <property type="project" value="UniProtKB-UniRule"/>
</dbReference>
<dbReference type="GO" id="GO:0000976">
    <property type="term" value="F:transcription cis-regulatory region binding"/>
    <property type="evidence" value="ECO:0007669"/>
    <property type="project" value="TreeGrafter"/>
</dbReference>
<dbReference type="GO" id="GO:2000143">
    <property type="term" value="P:negative regulation of DNA-templated transcription initiation"/>
    <property type="evidence" value="ECO:0007669"/>
    <property type="project" value="TreeGrafter"/>
</dbReference>
<dbReference type="CDD" id="cd16321">
    <property type="entry name" value="MraZ_C"/>
    <property type="match status" value="1"/>
</dbReference>
<dbReference type="CDD" id="cd16320">
    <property type="entry name" value="MraZ_N"/>
    <property type="match status" value="1"/>
</dbReference>
<dbReference type="Gene3D" id="3.40.1550.20">
    <property type="entry name" value="Transcriptional regulator MraZ domain"/>
    <property type="match status" value="1"/>
</dbReference>
<dbReference type="HAMAP" id="MF_01008">
    <property type="entry name" value="MraZ"/>
    <property type="match status" value="1"/>
</dbReference>
<dbReference type="InterPro" id="IPR003444">
    <property type="entry name" value="MraZ"/>
</dbReference>
<dbReference type="InterPro" id="IPR035644">
    <property type="entry name" value="MraZ_C"/>
</dbReference>
<dbReference type="InterPro" id="IPR020603">
    <property type="entry name" value="MraZ_dom"/>
</dbReference>
<dbReference type="InterPro" id="IPR035642">
    <property type="entry name" value="MraZ_N"/>
</dbReference>
<dbReference type="InterPro" id="IPR038619">
    <property type="entry name" value="MraZ_sf"/>
</dbReference>
<dbReference type="InterPro" id="IPR007159">
    <property type="entry name" value="SpoVT-AbrB_dom"/>
</dbReference>
<dbReference type="InterPro" id="IPR037914">
    <property type="entry name" value="SpoVT-AbrB_sf"/>
</dbReference>
<dbReference type="NCBIfam" id="NF001482">
    <property type="entry name" value="PRK00326.3-4"/>
    <property type="match status" value="1"/>
</dbReference>
<dbReference type="PANTHER" id="PTHR34701">
    <property type="entry name" value="TRANSCRIPTIONAL REGULATOR MRAZ"/>
    <property type="match status" value="1"/>
</dbReference>
<dbReference type="PANTHER" id="PTHR34701:SF1">
    <property type="entry name" value="TRANSCRIPTIONAL REGULATOR MRAZ"/>
    <property type="match status" value="1"/>
</dbReference>
<dbReference type="Pfam" id="PF02381">
    <property type="entry name" value="MraZ"/>
    <property type="match status" value="1"/>
</dbReference>
<dbReference type="SUPFAM" id="SSF89447">
    <property type="entry name" value="AbrB/MazE/MraZ-like"/>
    <property type="match status" value="1"/>
</dbReference>
<dbReference type="PROSITE" id="PS51740">
    <property type="entry name" value="SPOVT_ABRB"/>
    <property type="match status" value="2"/>
</dbReference>
<proteinExistence type="inferred from homology"/>
<keyword id="KW-0963">Cytoplasm</keyword>
<keyword id="KW-0238">DNA-binding</keyword>
<keyword id="KW-1185">Reference proteome</keyword>
<keyword id="KW-0677">Repeat</keyword>
<keyword id="KW-0804">Transcription</keyword>
<keyword id="KW-0805">Transcription regulation</keyword>
<name>MRAZ_GEOUR</name>
<sequence>MFRGKFETTIDVKGRTSLPAKFRDVLFETFGDERFFITNSNPVRLGEGVYSSGLVVYPYKEWLALEEKLMVGTGLGLSSAELAAVKRRIVAPAIECVADKLGRVLVPPHLRKSAVLEREILFVGMLNKAEIWSQAEWEKVCRQDEQNFPIDSPVLAELGL</sequence>
<evidence type="ECO:0000255" key="1">
    <source>
        <dbReference type="HAMAP-Rule" id="MF_01008"/>
    </source>
</evidence>
<evidence type="ECO:0000255" key="2">
    <source>
        <dbReference type="PROSITE-ProRule" id="PRU01076"/>
    </source>
</evidence>
<organism>
    <name type="scientific">Geotalea uraniireducens (strain Rf4)</name>
    <name type="common">Geobacter uraniireducens</name>
    <dbReference type="NCBI Taxonomy" id="351605"/>
    <lineage>
        <taxon>Bacteria</taxon>
        <taxon>Pseudomonadati</taxon>
        <taxon>Thermodesulfobacteriota</taxon>
        <taxon>Desulfuromonadia</taxon>
        <taxon>Geobacterales</taxon>
        <taxon>Geobacteraceae</taxon>
        <taxon>Geotalea</taxon>
    </lineage>
</organism>
<feature type="chain" id="PRO_1000084005" description="Transcriptional regulator MraZ">
    <location>
        <begin position="1"/>
        <end position="160"/>
    </location>
</feature>
<feature type="domain" description="SpoVT-AbrB 1" evidence="2">
    <location>
        <begin position="5"/>
        <end position="50"/>
    </location>
</feature>
<feature type="domain" description="SpoVT-AbrB 2" evidence="2">
    <location>
        <begin position="93"/>
        <end position="136"/>
    </location>
</feature>
<gene>
    <name evidence="1" type="primary">mraZ</name>
    <name type="ordered locus">Gura_3983</name>
</gene>
<protein>
    <recommendedName>
        <fullName>Transcriptional regulator MraZ</fullName>
    </recommendedName>
</protein>